<organism>
    <name type="scientific">Bacillus cereus (strain B4264)</name>
    <dbReference type="NCBI Taxonomy" id="405532"/>
    <lineage>
        <taxon>Bacteria</taxon>
        <taxon>Bacillati</taxon>
        <taxon>Bacillota</taxon>
        <taxon>Bacilli</taxon>
        <taxon>Bacillales</taxon>
        <taxon>Bacillaceae</taxon>
        <taxon>Bacillus</taxon>
        <taxon>Bacillus cereus group</taxon>
    </lineage>
</organism>
<evidence type="ECO:0000255" key="1">
    <source>
        <dbReference type="HAMAP-Rule" id="MF_00226"/>
    </source>
</evidence>
<gene>
    <name evidence="1" type="primary">cinA</name>
    <name type="ordered locus">BCB4264_A3879</name>
</gene>
<comment type="similarity">
    <text evidence="1">Belongs to the CinA family.</text>
</comment>
<accession>B7HDQ5</accession>
<proteinExistence type="inferred from homology"/>
<sequence>MNAEIIAVGTELLLGQIANTNAQFLSEKLASIGINVYYHTVVGDNNKRLQKAIEAAEERADILIFTGGLGPTKDDLTKETIATSLDEELVYDEKALALISNYFKRTGREFTENNKKQALVLNGATVFANDHGMAPGMGVNKNEKVYILLPGPPKEMKPMYVSYVEPFLRNFTTGENIYSRVLRFFGIGESQLEVKVQDLIDGQTNPTIAPLANDGEVTLRLTAKHQNVSEAEKLIQHVEDLILERVGEFFYGYDQEFLHYKAIELLKRKGLTLACAESLTGGLFGNQVTENAGVSSVFKGGVICYHNDVKQHVLRVPEEVLHTDGAVSKECARYLAENVKDVLKADIGISFTGVAGPDASEQKEPGTVFVGLSIKDEPTVVFPLNLSGSRQQIRERTAKYGFYHLYKKLEEI</sequence>
<dbReference type="EMBL" id="CP001176">
    <property type="protein sequence ID" value="ACK59466.1"/>
    <property type="molecule type" value="Genomic_DNA"/>
</dbReference>
<dbReference type="RefSeq" id="WP_000990697.1">
    <property type="nucleotide sequence ID" value="NC_011725.1"/>
</dbReference>
<dbReference type="SMR" id="B7HDQ5"/>
<dbReference type="KEGG" id="bcb:BCB4264_A3879"/>
<dbReference type="HOGENOM" id="CLU_030805_9_3_9"/>
<dbReference type="Proteomes" id="UP000007096">
    <property type="component" value="Chromosome"/>
</dbReference>
<dbReference type="CDD" id="cd00885">
    <property type="entry name" value="cinA"/>
    <property type="match status" value="1"/>
</dbReference>
<dbReference type="Gene3D" id="3.30.70.2860">
    <property type="match status" value="1"/>
</dbReference>
<dbReference type="Gene3D" id="3.90.950.20">
    <property type="entry name" value="CinA-like"/>
    <property type="match status" value="1"/>
</dbReference>
<dbReference type="Gene3D" id="3.40.980.10">
    <property type="entry name" value="MoaB/Mog-like domain"/>
    <property type="match status" value="1"/>
</dbReference>
<dbReference type="HAMAP" id="MF_00226_B">
    <property type="entry name" value="CinA_B"/>
    <property type="match status" value="1"/>
</dbReference>
<dbReference type="InterPro" id="IPR050101">
    <property type="entry name" value="CinA"/>
</dbReference>
<dbReference type="InterPro" id="IPR036653">
    <property type="entry name" value="CinA-like_C"/>
</dbReference>
<dbReference type="InterPro" id="IPR008136">
    <property type="entry name" value="CinA_C"/>
</dbReference>
<dbReference type="InterPro" id="IPR041424">
    <property type="entry name" value="CinA_KH"/>
</dbReference>
<dbReference type="InterPro" id="IPR008135">
    <property type="entry name" value="Competence-induced_CinA"/>
</dbReference>
<dbReference type="InterPro" id="IPR036425">
    <property type="entry name" value="MoaB/Mog-like_dom_sf"/>
</dbReference>
<dbReference type="InterPro" id="IPR001453">
    <property type="entry name" value="MoaB/Mog_dom"/>
</dbReference>
<dbReference type="NCBIfam" id="TIGR00200">
    <property type="entry name" value="cinA_nterm"/>
    <property type="match status" value="1"/>
</dbReference>
<dbReference type="NCBIfam" id="TIGR00177">
    <property type="entry name" value="molyb_syn"/>
    <property type="match status" value="1"/>
</dbReference>
<dbReference type="NCBIfam" id="TIGR00199">
    <property type="entry name" value="PncC_domain"/>
    <property type="match status" value="1"/>
</dbReference>
<dbReference type="NCBIfam" id="NF001813">
    <property type="entry name" value="PRK00549.1"/>
    <property type="match status" value="1"/>
</dbReference>
<dbReference type="PANTHER" id="PTHR13939">
    <property type="entry name" value="NICOTINAMIDE-NUCLEOTIDE AMIDOHYDROLASE PNCC"/>
    <property type="match status" value="1"/>
</dbReference>
<dbReference type="PANTHER" id="PTHR13939:SF0">
    <property type="entry name" value="NMN AMIDOHYDROLASE-LIKE PROTEIN YFAY"/>
    <property type="match status" value="1"/>
</dbReference>
<dbReference type="Pfam" id="PF02464">
    <property type="entry name" value="CinA"/>
    <property type="match status" value="1"/>
</dbReference>
<dbReference type="Pfam" id="PF18146">
    <property type="entry name" value="CinA_KH"/>
    <property type="match status" value="1"/>
</dbReference>
<dbReference type="Pfam" id="PF00994">
    <property type="entry name" value="MoCF_biosynth"/>
    <property type="match status" value="1"/>
</dbReference>
<dbReference type="PIRSF" id="PIRSF006728">
    <property type="entry name" value="CinA"/>
    <property type="match status" value="1"/>
</dbReference>
<dbReference type="SMART" id="SM00852">
    <property type="entry name" value="MoCF_biosynth"/>
    <property type="match status" value="1"/>
</dbReference>
<dbReference type="SUPFAM" id="SSF142433">
    <property type="entry name" value="CinA-like"/>
    <property type="match status" value="1"/>
</dbReference>
<dbReference type="SUPFAM" id="SSF53218">
    <property type="entry name" value="Molybdenum cofactor biosynthesis proteins"/>
    <property type="match status" value="1"/>
</dbReference>
<feature type="chain" id="PRO_1000118915" description="Putative competence-damage inducible protein">
    <location>
        <begin position="1"/>
        <end position="412"/>
    </location>
</feature>
<name>CINA_BACC4</name>
<protein>
    <recommendedName>
        <fullName evidence="1">Putative competence-damage inducible protein</fullName>
    </recommendedName>
</protein>
<reference key="1">
    <citation type="submission" date="2008-10" db="EMBL/GenBank/DDBJ databases">
        <title>Genome sequence of Bacillus cereus B4264.</title>
        <authorList>
            <person name="Dodson R.J."/>
            <person name="Durkin A.S."/>
            <person name="Rosovitz M.J."/>
            <person name="Rasko D.A."/>
            <person name="Hoffmaster A."/>
            <person name="Ravel J."/>
            <person name="Sutton G."/>
        </authorList>
    </citation>
    <scope>NUCLEOTIDE SEQUENCE [LARGE SCALE GENOMIC DNA]</scope>
    <source>
        <strain>B4264</strain>
    </source>
</reference>